<keyword id="KW-0004">4Fe-4S</keyword>
<keyword id="KW-0007">Acetylation</keyword>
<keyword id="KW-0408">Iron</keyword>
<keyword id="KW-0411">Iron-sulfur</keyword>
<keyword id="KW-0479">Metal-binding</keyword>
<keyword id="KW-1185">Reference proteome</keyword>
<accession>Q5BK18</accession>
<evidence type="ECO:0000250" key="1">
    <source>
        <dbReference type="UniProtKB" id="Q9H6Q4"/>
    </source>
</evidence>
<evidence type="ECO:0000255" key="2"/>
<evidence type="ECO:0000305" key="3"/>
<evidence type="ECO:0000312" key="4">
    <source>
        <dbReference type="RGD" id="1305982"/>
    </source>
</evidence>
<proteinExistence type="evidence at transcript level"/>
<comment type="function">
    <text evidence="1">Component of the cytosolic iron-sulfur protein assembly (CIA) complex, a multiprotein complex that mediates the incorporation of iron-sulfur cluster into extramitochondrial Fe/S proteins. Seems to negatively regulate the level of HIF1A expression, although this effect could be indirect (By similarity).</text>
</comment>
<comment type="subunit">
    <text evidence="1">External component of the CIA complex. In the CIA complex, interacts directly with CIAO1 and MMS19.</text>
</comment>
<comment type="similarity">
    <text evidence="3">Belongs to the NARF family.</text>
</comment>
<dbReference type="EMBL" id="BC091240">
    <property type="protein sequence ID" value="AAH91240.1"/>
    <property type="molecule type" value="mRNA"/>
</dbReference>
<dbReference type="RefSeq" id="NP_001013201.1">
    <property type="nucleotide sequence ID" value="NM_001013183.1"/>
</dbReference>
<dbReference type="SMR" id="Q5BK18"/>
<dbReference type="FunCoup" id="Q5BK18">
    <property type="interactions" value="2429"/>
</dbReference>
<dbReference type="STRING" id="10116.ENSRNOP00000026518"/>
<dbReference type="iPTMnet" id="Q5BK18"/>
<dbReference type="PhosphoSitePlus" id="Q5BK18"/>
<dbReference type="PaxDb" id="10116-ENSRNOP00000026518"/>
<dbReference type="GeneID" id="360496"/>
<dbReference type="KEGG" id="rno:360496"/>
<dbReference type="UCSC" id="RGD:1305982">
    <property type="organism name" value="rat"/>
</dbReference>
<dbReference type="AGR" id="RGD:1305982"/>
<dbReference type="CTD" id="64428"/>
<dbReference type="RGD" id="1305982">
    <property type="gene designation" value="Ciao3"/>
</dbReference>
<dbReference type="VEuPathDB" id="HostDB:ENSRNOG00000019522"/>
<dbReference type="eggNOG" id="KOG2439">
    <property type="taxonomic scope" value="Eukaryota"/>
</dbReference>
<dbReference type="HOGENOM" id="CLU_018240_0_0_1"/>
<dbReference type="InParanoid" id="Q5BK18"/>
<dbReference type="OrthoDB" id="21680at9989"/>
<dbReference type="PRO" id="PR:Q5BK18"/>
<dbReference type="Proteomes" id="UP000002494">
    <property type="component" value="Chromosome 10"/>
</dbReference>
<dbReference type="Bgee" id="ENSRNOG00000019522">
    <property type="expression patterns" value="Expressed in heart and 20 other cell types or tissues"/>
</dbReference>
<dbReference type="GO" id="GO:0097361">
    <property type="term" value="C:cytosolic [4Fe-4S] assembly targeting complex"/>
    <property type="evidence" value="ECO:0000250"/>
    <property type="project" value="UniProtKB"/>
</dbReference>
<dbReference type="GO" id="GO:0051539">
    <property type="term" value="F:4 iron, 4 sulfur cluster binding"/>
    <property type="evidence" value="ECO:0007669"/>
    <property type="project" value="UniProtKB-KW"/>
</dbReference>
<dbReference type="GO" id="GO:0046872">
    <property type="term" value="F:metal ion binding"/>
    <property type="evidence" value="ECO:0007669"/>
    <property type="project" value="UniProtKB-KW"/>
</dbReference>
<dbReference type="GO" id="GO:0002244">
    <property type="term" value="P:hematopoietic progenitor cell differentiation"/>
    <property type="evidence" value="ECO:0000266"/>
    <property type="project" value="RGD"/>
</dbReference>
<dbReference type="GO" id="GO:0032364">
    <property type="term" value="P:intracellular oxygen homeostasis"/>
    <property type="evidence" value="ECO:0000266"/>
    <property type="project" value="RGD"/>
</dbReference>
<dbReference type="GO" id="GO:0016226">
    <property type="term" value="P:iron-sulfur cluster assembly"/>
    <property type="evidence" value="ECO:0000250"/>
    <property type="project" value="UniProtKB"/>
</dbReference>
<dbReference type="GO" id="GO:0010468">
    <property type="term" value="P:regulation of gene expression"/>
    <property type="evidence" value="ECO:0000266"/>
    <property type="project" value="RGD"/>
</dbReference>
<dbReference type="GO" id="GO:0001666">
    <property type="term" value="P:response to hypoxia"/>
    <property type="evidence" value="ECO:0000266"/>
    <property type="project" value="RGD"/>
</dbReference>
<dbReference type="FunFam" id="3.30.70.20:FF:000042">
    <property type="entry name" value="Cytosolic Fe-S cluster assembly factor NAR1"/>
    <property type="match status" value="1"/>
</dbReference>
<dbReference type="Gene3D" id="3.40.50.1780">
    <property type="match status" value="1"/>
</dbReference>
<dbReference type="Gene3D" id="3.40.950.10">
    <property type="entry name" value="Fe-only Hydrogenase (Larger Subunit), Chain L, domain 3"/>
    <property type="match status" value="1"/>
</dbReference>
<dbReference type="InterPro" id="IPR050340">
    <property type="entry name" value="Cytosolic_Fe-S_CAF"/>
</dbReference>
<dbReference type="InterPro" id="IPR009016">
    <property type="entry name" value="Fe_hydrogenase"/>
</dbReference>
<dbReference type="InterPro" id="IPR004108">
    <property type="entry name" value="Fe_hydrogenase_lsu_C"/>
</dbReference>
<dbReference type="InterPro" id="IPR003149">
    <property type="entry name" value="Fe_hydrogenase_ssu"/>
</dbReference>
<dbReference type="PANTHER" id="PTHR11615">
    <property type="entry name" value="NITRATE, FORMATE, IRON DEHYDROGENASE"/>
    <property type="match status" value="1"/>
</dbReference>
<dbReference type="Pfam" id="PF02906">
    <property type="entry name" value="Fe_hyd_lg_C"/>
    <property type="match status" value="1"/>
</dbReference>
<dbReference type="Pfam" id="PF02256">
    <property type="entry name" value="Fe_hyd_SSU"/>
    <property type="match status" value="1"/>
</dbReference>
<dbReference type="SMART" id="SM00902">
    <property type="entry name" value="Fe_hyd_SSU"/>
    <property type="match status" value="1"/>
</dbReference>
<dbReference type="SUPFAM" id="SSF53920">
    <property type="entry name" value="Fe-only hydrogenase"/>
    <property type="match status" value="1"/>
</dbReference>
<reference key="1">
    <citation type="journal article" date="2004" name="Genome Res.">
        <title>The status, quality, and expansion of the NIH full-length cDNA project: the Mammalian Gene Collection (MGC).</title>
        <authorList>
            <consortium name="The MGC Project Team"/>
        </authorList>
    </citation>
    <scope>NUCLEOTIDE SEQUENCE [LARGE SCALE MRNA]</scope>
    <source>
        <tissue>Liver</tissue>
    </source>
</reference>
<protein>
    <recommendedName>
        <fullName evidence="3">Cytosolic iron-sulfur assembly component 3</fullName>
    </recommendedName>
    <alternativeName>
        <fullName>Cytosolic Fe-S cluster assembly factor NARFL</fullName>
    </alternativeName>
    <alternativeName>
        <fullName>Iron-only hydrogenase-like protein 1</fullName>
        <shortName>IOP1</shortName>
    </alternativeName>
    <alternativeName>
        <fullName>Nuclear prelamin A recognition factor-like protein</fullName>
    </alternativeName>
</protein>
<organism>
    <name type="scientific">Rattus norvegicus</name>
    <name type="common">Rat</name>
    <dbReference type="NCBI Taxonomy" id="10116"/>
    <lineage>
        <taxon>Eukaryota</taxon>
        <taxon>Metazoa</taxon>
        <taxon>Chordata</taxon>
        <taxon>Craniata</taxon>
        <taxon>Vertebrata</taxon>
        <taxon>Euteleostomi</taxon>
        <taxon>Mammalia</taxon>
        <taxon>Eutheria</taxon>
        <taxon>Euarchontoglires</taxon>
        <taxon>Glires</taxon>
        <taxon>Rodentia</taxon>
        <taxon>Myomorpha</taxon>
        <taxon>Muroidea</taxon>
        <taxon>Muridae</taxon>
        <taxon>Murinae</taxon>
        <taxon>Rattus</taxon>
    </lineage>
</organism>
<gene>
    <name evidence="4" type="primary">Ciao3</name>
    <name evidence="4" type="synonym">Narfl</name>
</gene>
<feature type="initiator methionine" description="Removed" evidence="1">
    <location>
        <position position="1"/>
    </location>
</feature>
<feature type="chain" id="PRO_0000288488" description="Cytosolic iron-sulfur assembly component 3">
    <location>
        <begin position="2"/>
        <end position="476"/>
    </location>
</feature>
<feature type="binding site" evidence="2">
    <location>
        <position position="24"/>
    </location>
    <ligand>
        <name>[4Fe-4S] cluster</name>
        <dbReference type="ChEBI" id="CHEBI:49883"/>
        <label>1</label>
    </ligand>
</feature>
<feature type="binding site" evidence="2">
    <location>
        <position position="71"/>
    </location>
    <ligand>
        <name>[4Fe-4S] cluster</name>
        <dbReference type="ChEBI" id="CHEBI:49883"/>
        <label>1</label>
    </ligand>
</feature>
<feature type="binding site" evidence="2">
    <location>
        <position position="74"/>
    </location>
    <ligand>
        <name>[4Fe-4S] cluster</name>
        <dbReference type="ChEBI" id="CHEBI:49883"/>
        <label>1</label>
    </ligand>
</feature>
<feature type="binding site" evidence="2">
    <location>
        <position position="77"/>
    </location>
    <ligand>
        <name>[4Fe-4S] cluster</name>
        <dbReference type="ChEBI" id="CHEBI:49883"/>
        <label>1</label>
    </ligand>
</feature>
<feature type="binding site" evidence="2">
    <location>
        <position position="190"/>
    </location>
    <ligand>
        <name>[4Fe-4S] cluster</name>
        <dbReference type="ChEBI" id="CHEBI:49883"/>
        <label>2</label>
    </ligand>
</feature>
<feature type="binding site" evidence="2">
    <location>
        <position position="246"/>
    </location>
    <ligand>
        <name>[4Fe-4S] cluster</name>
        <dbReference type="ChEBI" id="CHEBI:49883"/>
        <label>2</label>
    </ligand>
</feature>
<feature type="binding site" evidence="2">
    <location>
        <position position="395"/>
    </location>
    <ligand>
        <name>[4Fe-4S] cluster</name>
        <dbReference type="ChEBI" id="CHEBI:49883"/>
        <label>2</label>
    </ligand>
</feature>
<feature type="binding site" evidence="2">
    <location>
        <position position="399"/>
    </location>
    <ligand>
        <name>[4Fe-4S] cluster</name>
        <dbReference type="ChEBI" id="CHEBI:49883"/>
        <label>2</label>
    </ligand>
</feature>
<feature type="modified residue" description="N-acetylalanine" evidence="1">
    <location>
        <position position="2"/>
    </location>
</feature>
<sequence length="476" mass="53167">MASPFSGALQLTDLDDFIGPSQSCIKPVTVAKKPGSGIAKIHIEDDGSYFQVNPDGRSQKLEKAKVSLNDCLACSGCVTSAETILITQQSHEELRKVLDANKVAAPGQQRLVVVSVSPQSRASLAARFQLDSTDTARKLTSFFKKIGVHFVFDTAFARNFSLLESQKEFVQRFREQANSREALPMLASACPGWICYAEKTHGNFILPYISTARSPQQVMGSLIKDFFAQQQLLTPDKIYHVTVMPCYDKKLEASRPDFFNQEYQTRDVDCVLTTGEVFRLLEEEGVSLSELEPVPLDGLTRSVSAEEPTSHRGGGSGGYLEHVFRHAAQELFGIHVADVTYQPMRNKDFQEVTLEREGQVLLRFAVAYGFRNIQNLVQKLKRGRCPYHYVEVMACPSGCLNGGGQLKAPDTEGRELLQQVERLYSMVRTEAPEDAPGVQELYQHWLQGEDSERASHLLHTQYHAVEKINSGLSIRW</sequence>
<name>CIAO3_RAT</name>